<feature type="chain" id="PRO_0000342871" description="Pentatricopeptide repeat-containing protein At1g77405">
    <location>
        <begin position="1"/>
        <end position="458"/>
    </location>
</feature>
<feature type="repeat" description="PPR 1">
    <location>
        <begin position="164"/>
        <end position="198"/>
    </location>
</feature>
<feature type="repeat" description="PPR 2">
    <location>
        <begin position="199"/>
        <end position="233"/>
    </location>
</feature>
<feature type="repeat" description="PPR 3">
    <location>
        <begin position="236"/>
        <end position="271"/>
    </location>
</feature>
<feature type="repeat" description="PPR 4">
    <location>
        <begin position="282"/>
        <end position="316"/>
    </location>
</feature>
<feature type="repeat" description="PPR 5">
    <location>
        <begin position="317"/>
        <end position="351"/>
    </location>
</feature>
<feature type="repeat" description="PPR 6">
    <location>
        <begin position="353"/>
        <end position="387"/>
    </location>
</feature>
<feature type="repeat" description="PPR 7">
    <location>
        <begin position="388"/>
        <end position="419"/>
    </location>
</feature>
<name>PP130_ARATH</name>
<proteinExistence type="evidence at transcript level"/>
<reference key="1">
    <citation type="journal article" date="2000" name="Nature">
        <title>Sequence and analysis of chromosome 1 of the plant Arabidopsis thaliana.</title>
        <authorList>
            <person name="Theologis A."/>
            <person name="Ecker J.R."/>
            <person name="Palm C.J."/>
            <person name="Federspiel N.A."/>
            <person name="Kaul S."/>
            <person name="White O."/>
            <person name="Alonso J."/>
            <person name="Altafi H."/>
            <person name="Araujo R."/>
            <person name="Bowman C.L."/>
            <person name="Brooks S.Y."/>
            <person name="Buehler E."/>
            <person name="Chan A."/>
            <person name="Chao Q."/>
            <person name="Chen H."/>
            <person name="Cheuk R.F."/>
            <person name="Chin C.W."/>
            <person name="Chung M.K."/>
            <person name="Conn L."/>
            <person name="Conway A.B."/>
            <person name="Conway A.R."/>
            <person name="Creasy T.H."/>
            <person name="Dewar K."/>
            <person name="Dunn P."/>
            <person name="Etgu P."/>
            <person name="Feldblyum T.V."/>
            <person name="Feng J.-D."/>
            <person name="Fong B."/>
            <person name="Fujii C.Y."/>
            <person name="Gill J.E."/>
            <person name="Goldsmith A.D."/>
            <person name="Haas B."/>
            <person name="Hansen N.F."/>
            <person name="Hughes B."/>
            <person name="Huizar L."/>
            <person name="Hunter J.L."/>
            <person name="Jenkins J."/>
            <person name="Johnson-Hopson C."/>
            <person name="Khan S."/>
            <person name="Khaykin E."/>
            <person name="Kim C.J."/>
            <person name="Koo H.L."/>
            <person name="Kremenetskaia I."/>
            <person name="Kurtz D.B."/>
            <person name="Kwan A."/>
            <person name="Lam B."/>
            <person name="Langin-Hooper S."/>
            <person name="Lee A."/>
            <person name="Lee J.M."/>
            <person name="Lenz C.A."/>
            <person name="Li J.H."/>
            <person name="Li Y.-P."/>
            <person name="Lin X."/>
            <person name="Liu S.X."/>
            <person name="Liu Z.A."/>
            <person name="Luros J.S."/>
            <person name="Maiti R."/>
            <person name="Marziali A."/>
            <person name="Militscher J."/>
            <person name="Miranda M."/>
            <person name="Nguyen M."/>
            <person name="Nierman W.C."/>
            <person name="Osborne B.I."/>
            <person name="Pai G."/>
            <person name="Peterson J."/>
            <person name="Pham P.K."/>
            <person name="Rizzo M."/>
            <person name="Rooney T."/>
            <person name="Rowley D."/>
            <person name="Sakano H."/>
            <person name="Salzberg S.L."/>
            <person name="Schwartz J.R."/>
            <person name="Shinn P."/>
            <person name="Southwick A.M."/>
            <person name="Sun H."/>
            <person name="Tallon L.J."/>
            <person name="Tambunga G."/>
            <person name="Toriumi M.J."/>
            <person name="Town C.D."/>
            <person name="Utterback T."/>
            <person name="Van Aken S."/>
            <person name="Vaysberg M."/>
            <person name="Vysotskaia V.S."/>
            <person name="Walker M."/>
            <person name="Wu D."/>
            <person name="Yu G."/>
            <person name="Fraser C.M."/>
            <person name="Venter J.C."/>
            <person name="Davis R.W."/>
        </authorList>
    </citation>
    <scope>NUCLEOTIDE SEQUENCE [LARGE SCALE GENOMIC DNA]</scope>
    <source>
        <strain>cv. Columbia</strain>
    </source>
</reference>
<reference key="2">
    <citation type="journal article" date="2017" name="Plant J.">
        <title>Araport11: a complete reannotation of the Arabidopsis thaliana reference genome.</title>
        <authorList>
            <person name="Cheng C.Y."/>
            <person name="Krishnakumar V."/>
            <person name="Chan A.P."/>
            <person name="Thibaud-Nissen F."/>
            <person name="Schobel S."/>
            <person name="Town C.D."/>
        </authorList>
    </citation>
    <scope>GENOME REANNOTATION</scope>
    <source>
        <strain>cv. Columbia</strain>
    </source>
</reference>
<reference key="3">
    <citation type="journal article" date="2006" name="Plant Biotechnol. J.">
        <title>Simultaneous high-throughput recombinational cloning of open reading frames in closed and open configurations.</title>
        <authorList>
            <person name="Underwood B.A."/>
            <person name="Vanderhaeghen R."/>
            <person name="Whitford R."/>
            <person name="Town C.D."/>
            <person name="Hilson P."/>
        </authorList>
    </citation>
    <scope>NUCLEOTIDE SEQUENCE [LARGE SCALE MRNA]</scope>
    <source>
        <strain>cv. Columbia</strain>
    </source>
</reference>
<reference key="4">
    <citation type="journal article" date="2004" name="Plant Cell">
        <title>Genome-wide analysis of Arabidopsis pentatricopeptide repeat proteins reveals their essential role in organelle biogenesis.</title>
        <authorList>
            <person name="Lurin C."/>
            <person name="Andres C."/>
            <person name="Aubourg S."/>
            <person name="Bellaoui M."/>
            <person name="Bitton F."/>
            <person name="Bruyere C."/>
            <person name="Caboche M."/>
            <person name="Debast C."/>
            <person name="Gualberto J."/>
            <person name="Hoffmann B."/>
            <person name="Lecharny A."/>
            <person name="Le Ret M."/>
            <person name="Martin-Magniette M.-L."/>
            <person name="Mireau H."/>
            <person name="Peeters N."/>
            <person name="Renou J.-P."/>
            <person name="Szurek B."/>
            <person name="Taconnat L."/>
            <person name="Small I."/>
        </authorList>
    </citation>
    <scope>GENE FAMILY</scope>
</reference>
<dbReference type="EMBL" id="AC078898">
    <property type="protein sequence ID" value="AAG29200.1"/>
    <property type="status" value="ALT_SEQ"/>
    <property type="molecule type" value="Genomic_DNA"/>
</dbReference>
<dbReference type="EMBL" id="CP002684">
    <property type="protein sequence ID" value="AEE35974.1"/>
    <property type="molecule type" value="Genomic_DNA"/>
</dbReference>
<dbReference type="EMBL" id="DQ446438">
    <property type="protein sequence ID" value="ABE65780.1"/>
    <property type="molecule type" value="mRNA"/>
</dbReference>
<dbReference type="PIR" id="C96803">
    <property type="entry name" value="C96803"/>
</dbReference>
<dbReference type="RefSeq" id="NP_177865.2">
    <property type="nucleotide sequence ID" value="NM_106390.3"/>
</dbReference>
<dbReference type="SMR" id="Q1PFC5"/>
<dbReference type="FunCoup" id="Q1PFC5">
    <property type="interactions" value="158"/>
</dbReference>
<dbReference type="iPTMnet" id="Q1PFC5"/>
<dbReference type="PaxDb" id="3702-AT1G77405.1"/>
<dbReference type="ProteomicsDB" id="249066"/>
<dbReference type="EnsemblPlants" id="AT1G77405.1">
    <property type="protein sequence ID" value="AT1G77405.1"/>
    <property type="gene ID" value="AT1G77405"/>
</dbReference>
<dbReference type="GeneID" id="844077"/>
<dbReference type="Gramene" id="AT1G77405.1">
    <property type="protein sequence ID" value="AT1G77405.1"/>
    <property type="gene ID" value="AT1G77405"/>
</dbReference>
<dbReference type="KEGG" id="ath:AT1G77405"/>
<dbReference type="Araport" id="AT1G77405"/>
<dbReference type="TAIR" id="AT1G77405"/>
<dbReference type="eggNOG" id="KOG4197">
    <property type="taxonomic scope" value="Eukaryota"/>
</dbReference>
<dbReference type="HOGENOM" id="CLU_002706_49_0_1"/>
<dbReference type="InParanoid" id="Q1PFC5"/>
<dbReference type="OMA" id="EFYYWVE"/>
<dbReference type="PhylomeDB" id="Q1PFC5"/>
<dbReference type="PRO" id="PR:Q1PFC5"/>
<dbReference type="Proteomes" id="UP000006548">
    <property type="component" value="Chromosome 1"/>
</dbReference>
<dbReference type="ExpressionAtlas" id="Q1PFC5">
    <property type="expression patterns" value="baseline and differential"/>
</dbReference>
<dbReference type="Gene3D" id="1.25.40.10">
    <property type="entry name" value="Tetratricopeptide repeat domain"/>
    <property type="match status" value="2"/>
</dbReference>
<dbReference type="InterPro" id="IPR051240">
    <property type="entry name" value="Mito_RNA-Proc/Resp"/>
</dbReference>
<dbReference type="InterPro" id="IPR002885">
    <property type="entry name" value="Pentatricopeptide_rpt"/>
</dbReference>
<dbReference type="InterPro" id="IPR011990">
    <property type="entry name" value="TPR-like_helical_dom_sf"/>
</dbReference>
<dbReference type="NCBIfam" id="TIGR00756">
    <property type="entry name" value="PPR"/>
    <property type="match status" value="5"/>
</dbReference>
<dbReference type="PANTHER" id="PTHR47933:SF76">
    <property type="entry name" value="PENTACOTRIPEPTIDE-REPEAT REGION OF PRORP DOMAIN-CONTAINING PROTEIN"/>
    <property type="match status" value="1"/>
</dbReference>
<dbReference type="PANTHER" id="PTHR47933">
    <property type="entry name" value="PENTATRICOPEPTIDE REPEAT-CONTAINING PROTEIN 1, MITOCHONDRIAL"/>
    <property type="match status" value="1"/>
</dbReference>
<dbReference type="Pfam" id="PF01535">
    <property type="entry name" value="PPR"/>
    <property type="match status" value="2"/>
</dbReference>
<dbReference type="Pfam" id="PF13041">
    <property type="entry name" value="PPR_2"/>
    <property type="match status" value="2"/>
</dbReference>
<dbReference type="PROSITE" id="PS51375">
    <property type="entry name" value="PPR"/>
    <property type="match status" value="7"/>
</dbReference>
<organism>
    <name type="scientific">Arabidopsis thaliana</name>
    <name type="common">Mouse-ear cress</name>
    <dbReference type="NCBI Taxonomy" id="3702"/>
    <lineage>
        <taxon>Eukaryota</taxon>
        <taxon>Viridiplantae</taxon>
        <taxon>Streptophyta</taxon>
        <taxon>Embryophyta</taxon>
        <taxon>Tracheophyta</taxon>
        <taxon>Spermatophyta</taxon>
        <taxon>Magnoliopsida</taxon>
        <taxon>eudicotyledons</taxon>
        <taxon>Gunneridae</taxon>
        <taxon>Pentapetalae</taxon>
        <taxon>rosids</taxon>
        <taxon>malvids</taxon>
        <taxon>Brassicales</taxon>
        <taxon>Brassicaceae</taxon>
        <taxon>Camelineae</taxon>
        <taxon>Arabidopsis</taxon>
    </lineage>
</organism>
<keyword id="KW-1185">Reference proteome</keyword>
<keyword id="KW-0677">Repeat</keyword>
<evidence type="ECO:0000305" key="1"/>
<sequence>MKPSQPLCNRIVDQLITAMIQNRPFDAVLASSTVAKPWTQQLVSDVLHSIPRFFFISPRSIGRQKGFRHRSPLKQRNLSDESQRRRSEVLVLGPGAYMDPKKVSIGLQKALEFFFWIETHFGFDHNEITCRDMACLLAKGNDFKGLWDFLRQVSRRENGKNVVTTASITCLMKCLGEEGFVKEALATFYRMKEYHCKPDVYAYNTIINALCRVGNFKKARFLLDQMQLPGFRYPPDTYTYTILISSYCRYGMQTGCRKAIRRRMWEANRMFREMLFRGFVPDVVTYNCLIDGCCKTNRIGRALELFEDMKTKGCVPNQVTYNSFIRYYSVTNEIEGAIEMMRTMKKLGHGVPGSSTYTPLIHALVETRRAAEARDLVVEMVEAGLVPREYTYKLVCDALSSEGLASTLDEELHKRMREGIQQRYSRVMKIKPTMARKEVVRKYFHKIDGNQNFAMEEI</sequence>
<gene>
    <name type="ordered locus">At1g77405</name>
    <name type="ORF">F2P24.16</name>
</gene>
<protein>
    <recommendedName>
        <fullName>Pentatricopeptide repeat-containing protein At1g77405</fullName>
    </recommendedName>
</protein>
<accession>Q1PFC5</accession>
<accession>Q9FVW8</accession>
<comment type="similarity">
    <text evidence="1">Belongs to the PPR family. P subfamily.</text>
</comment>
<comment type="sequence caution" evidence="1">
    <conflict type="erroneous gene model prediction">
        <sequence resource="EMBL-CDS" id="AAG29200"/>
    </conflict>
</comment>
<comment type="online information" name="Pentatricopeptide repeat proteins">
    <link uri="https://ppr.plantenergy.uwa.edu.au"/>
</comment>